<comment type="function">
    <text evidence="1">Specifically methylates the adenine in position 1618 of 23S rRNA.</text>
</comment>
<comment type="catalytic activity">
    <reaction evidence="1">
        <text>adenosine(1618) in 23S rRNA + S-adenosyl-L-methionine = N(6)-methyladenosine(1618) in 23S rRNA + S-adenosyl-L-homocysteine + H(+)</text>
        <dbReference type="Rhea" id="RHEA:16497"/>
        <dbReference type="Rhea" id="RHEA-COMP:10229"/>
        <dbReference type="Rhea" id="RHEA-COMP:10231"/>
        <dbReference type="ChEBI" id="CHEBI:15378"/>
        <dbReference type="ChEBI" id="CHEBI:57856"/>
        <dbReference type="ChEBI" id="CHEBI:59789"/>
        <dbReference type="ChEBI" id="CHEBI:74411"/>
        <dbReference type="ChEBI" id="CHEBI:74449"/>
        <dbReference type="EC" id="2.1.1.181"/>
    </reaction>
</comment>
<comment type="subcellular location">
    <subcellularLocation>
        <location evidence="1">Cytoplasm</location>
    </subcellularLocation>
</comment>
<comment type="similarity">
    <text evidence="1">Belongs to the methyltransferase superfamily. METTL16/RlmF family.</text>
</comment>
<comment type="sequence caution" evidence="2">
    <conflict type="erroneous initiation">
        <sequence resource="EMBL-CDS" id="AAN79365"/>
    </conflict>
</comment>
<feature type="chain" id="PRO_0000349913" description="Ribosomal RNA large subunit methyltransferase F">
    <location>
        <begin position="1"/>
        <end position="308"/>
    </location>
</feature>
<proteinExistence type="inferred from homology"/>
<dbReference type="EC" id="2.1.1.181" evidence="1"/>
<dbReference type="EMBL" id="AE014075">
    <property type="protein sequence ID" value="AAN79365.1"/>
    <property type="status" value="ALT_INIT"/>
    <property type="molecule type" value="Genomic_DNA"/>
</dbReference>
<dbReference type="RefSeq" id="WP_001304786.1">
    <property type="nucleotide sequence ID" value="NZ_CP051263.1"/>
</dbReference>
<dbReference type="SMR" id="Q8FJM4"/>
<dbReference type="STRING" id="199310.c0892"/>
<dbReference type="KEGG" id="ecc:c0892"/>
<dbReference type="eggNOG" id="COG3129">
    <property type="taxonomic scope" value="Bacteria"/>
</dbReference>
<dbReference type="HOGENOM" id="CLU_027534_3_0_6"/>
<dbReference type="Proteomes" id="UP000001410">
    <property type="component" value="Chromosome"/>
</dbReference>
<dbReference type="GO" id="GO:0005737">
    <property type="term" value="C:cytoplasm"/>
    <property type="evidence" value="ECO:0007669"/>
    <property type="project" value="UniProtKB-SubCell"/>
</dbReference>
<dbReference type="GO" id="GO:0052907">
    <property type="term" value="F:23S rRNA (adenine(1618)-N(6))-methyltransferase activity"/>
    <property type="evidence" value="ECO:0007669"/>
    <property type="project" value="UniProtKB-EC"/>
</dbReference>
<dbReference type="GO" id="GO:0070475">
    <property type="term" value="P:rRNA base methylation"/>
    <property type="evidence" value="ECO:0007669"/>
    <property type="project" value="TreeGrafter"/>
</dbReference>
<dbReference type="FunFam" id="3.40.50.150:FF:000045">
    <property type="entry name" value="Ribosomal RNA large subunit methyltransferase F"/>
    <property type="match status" value="1"/>
</dbReference>
<dbReference type="Gene3D" id="3.40.50.150">
    <property type="entry name" value="Vaccinia Virus protein VP39"/>
    <property type="match status" value="1"/>
</dbReference>
<dbReference type="HAMAP" id="MF_01848">
    <property type="entry name" value="23SrRNA_methyltr_F"/>
    <property type="match status" value="1"/>
</dbReference>
<dbReference type="InterPro" id="IPR010286">
    <property type="entry name" value="METTL16/RlmF"/>
</dbReference>
<dbReference type="InterPro" id="IPR016909">
    <property type="entry name" value="rRNA_lsu_MeTfrase_F"/>
</dbReference>
<dbReference type="InterPro" id="IPR029063">
    <property type="entry name" value="SAM-dependent_MTases_sf"/>
</dbReference>
<dbReference type="NCBIfam" id="NF008725">
    <property type="entry name" value="PRK11727.1"/>
    <property type="match status" value="1"/>
</dbReference>
<dbReference type="PANTHER" id="PTHR13393:SF0">
    <property type="entry name" value="RNA N6-ADENOSINE-METHYLTRANSFERASE METTL16"/>
    <property type="match status" value="1"/>
</dbReference>
<dbReference type="PANTHER" id="PTHR13393">
    <property type="entry name" value="SAM-DEPENDENT METHYLTRANSFERASE"/>
    <property type="match status" value="1"/>
</dbReference>
<dbReference type="Pfam" id="PF05971">
    <property type="entry name" value="Methyltransf_10"/>
    <property type="match status" value="1"/>
</dbReference>
<dbReference type="PIRSF" id="PIRSF029038">
    <property type="entry name" value="Mtase_YbiN_prd"/>
    <property type="match status" value="1"/>
</dbReference>
<dbReference type="SUPFAM" id="SSF53335">
    <property type="entry name" value="S-adenosyl-L-methionine-dependent methyltransferases"/>
    <property type="match status" value="1"/>
</dbReference>
<protein>
    <recommendedName>
        <fullName evidence="1">Ribosomal RNA large subunit methyltransferase F</fullName>
        <ecNumber evidence="1">2.1.1.181</ecNumber>
    </recommendedName>
    <alternativeName>
        <fullName evidence="1">23S rRNA mA1618 methyltransferase</fullName>
    </alternativeName>
    <alternativeName>
        <fullName evidence="1">rRNA adenine N-6-methyltransferase</fullName>
    </alternativeName>
</protein>
<organism>
    <name type="scientific">Escherichia coli O6:H1 (strain CFT073 / ATCC 700928 / UPEC)</name>
    <dbReference type="NCBI Taxonomy" id="199310"/>
    <lineage>
        <taxon>Bacteria</taxon>
        <taxon>Pseudomonadati</taxon>
        <taxon>Pseudomonadota</taxon>
        <taxon>Gammaproteobacteria</taxon>
        <taxon>Enterobacterales</taxon>
        <taxon>Enterobacteriaceae</taxon>
        <taxon>Escherichia</taxon>
    </lineage>
</organism>
<gene>
    <name evidence="1" type="primary">rlmF</name>
    <name type="ordered locus">c0892</name>
</gene>
<keyword id="KW-0963">Cytoplasm</keyword>
<keyword id="KW-0489">Methyltransferase</keyword>
<keyword id="KW-1185">Reference proteome</keyword>
<keyword id="KW-0698">rRNA processing</keyword>
<keyword id="KW-0949">S-adenosyl-L-methionine</keyword>
<keyword id="KW-0808">Transferase</keyword>
<sequence>MSAQKPGLHPRNRHHSRYDLATLCQVNPELRQFLTLTPAGEQSVDFANPLAVKALNKALLAHFYAVANWDIPDGFLCPPVPGRADYIHHLADLLAEASGTIPANASILDIGVGANCIYPLIGVHEYGWRFTGSETSSQALSSAQAIISANPGLNRAIRLRRQKESGAIFNGIIHKNEQYDATLCNPPFHNSATAARAGSERKRRNLGLNKDDALNFGGQQQELWCEGGEVAFIKKMIEESKGFAKQVMWFTSLVSRGENLPPLYRALTDVGAVKVVKKEMAQGQKQSRFIAWTFMNDEQRRRFVNRQR</sequence>
<evidence type="ECO:0000255" key="1">
    <source>
        <dbReference type="HAMAP-Rule" id="MF_01848"/>
    </source>
</evidence>
<evidence type="ECO:0000305" key="2"/>
<name>RLMF_ECOL6</name>
<reference key="1">
    <citation type="journal article" date="2002" name="Proc. Natl. Acad. Sci. U.S.A.">
        <title>Extensive mosaic structure revealed by the complete genome sequence of uropathogenic Escherichia coli.</title>
        <authorList>
            <person name="Welch R.A."/>
            <person name="Burland V."/>
            <person name="Plunkett G. III"/>
            <person name="Redford P."/>
            <person name="Roesch P."/>
            <person name="Rasko D."/>
            <person name="Buckles E.L."/>
            <person name="Liou S.-R."/>
            <person name="Boutin A."/>
            <person name="Hackett J."/>
            <person name="Stroud D."/>
            <person name="Mayhew G.F."/>
            <person name="Rose D.J."/>
            <person name="Zhou S."/>
            <person name="Schwartz D.C."/>
            <person name="Perna N.T."/>
            <person name="Mobley H.L.T."/>
            <person name="Donnenberg M.S."/>
            <person name="Blattner F.R."/>
        </authorList>
    </citation>
    <scope>NUCLEOTIDE SEQUENCE [LARGE SCALE GENOMIC DNA]</scope>
    <source>
        <strain>CFT073 / ATCC 700928 / UPEC</strain>
    </source>
</reference>
<accession>Q8FJM4</accession>